<keyword id="KW-0997">Cell inner membrane</keyword>
<keyword id="KW-1003">Cell membrane</keyword>
<keyword id="KW-0135">Cellulose biosynthesis</keyword>
<keyword id="KW-0328">Glycosyltransferase</keyword>
<keyword id="KW-0472">Membrane</keyword>
<keyword id="KW-0808">Transferase</keyword>
<keyword id="KW-0812">Transmembrane</keyword>
<keyword id="KW-1133">Transmembrane helix</keyword>
<comment type="catalytic activity">
    <reaction>
        <text>[(1-&gt;4)-beta-D-glucosyl](n) + UDP-alpha-D-glucose = [(1-&gt;4)-beta-D-glucosyl](n+1) + UDP + H(+)</text>
        <dbReference type="Rhea" id="RHEA:19929"/>
        <dbReference type="Rhea" id="RHEA-COMP:10033"/>
        <dbReference type="Rhea" id="RHEA-COMP:10034"/>
        <dbReference type="ChEBI" id="CHEBI:15378"/>
        <dbReference type="ChEBI" id="CHEBI:18246"/>
        <dbReference type="ChEBI" id="CHEBI:58223"/>
        <dbReference type="ChEBI" id="CHEBI:58885"/>
        <dbReference type="EC" id="2.4.1.12"/>
    </reaction>
</comment>
<comment type="subcellular location">
    <subcellularLocation>
        <location evidence="3">Cell inner membrane</location>
        <topology evidence="3">Multi-pass membrane protein</topology>
    </subcellularLocation>
</comment>
<comment type="domain">
    <text>There are two conserved domains in the globular part of the catalytic subunit: the N-terminal domain (domain A) contains the conserved DXD motif and is possibly involved in catalysis and substrate binding. The C-terminal domain (domain B) contains the QXXRW motif and is present only in processive glycosyl transferases. It could be involved in the processivity function of the enzyme, possibly required for holding the growing glycan chain in the active site.</text>
</comment>
<comment type="miscellaneous">
    <text>It is not essential for cellulose production in this strain.</text>
</comment>
<comment type="similarity">
    <text evidence="3">In the N-terminal section; belongs to the glycosyltransferase 2 family.</text>
</comment>
<comment type="similarity">
    <text evidence="3">In the C-terminal section; belongs to the AcsB/BcsB family.</text>
</comment>
<proteinExistence type="inferred from homology"/>
<name>ACSA2_NOVHA</name>
<reference key="1">
    <citation type="journal article" date="1995" name="J. Bacteriol.">
        <title>Identification of a second cellulose synthase gene (acsAII) in Acetobacter xylinum.</title>
        <authorList>
            <person name="Saxena I.M."/>
            <person name="Brown R.M. Jr."/>
        </authorList>
    </citation>
    <scope>NUCLEOTIDE SEQUENCE [GENOMIC DNA]</scope>
    <source>
        <strain>ATCC 23769 / NCIMB 8246</strain>
    </source>
</reference>
<evidence type="ECO:0000255" key="1"/>
<evidence type="ECO:0000256" key="2">
    <source>
        <dbReference type="SAM" id="MobiDB-lite"/>
    </source>
</evidence>
<evidence type="ECO:0000305" key="3"/>
<dbReference type="EC" id="2.4.1.12"/>
<dbReference type="EMBL" id="U15957">
    <property type="protein sequence ID" value="AAA85264.1"/>
    <property type="molecule type" value="Genomic_DNA"/>
</dbReference>
<dbReference type="PIR" id="T31338">
    <property type="entry name" value="T31338"/>
</dbReference>
<dbReference type="SMR" id="Q59167"/>
<dbReference type="CAZy" id="GT2">
    <property type="family name" value="Glycosyltransferase Family 2"/>
</dbReference>
<dbReference type="GO" id="GO:0005886">
    <property type="term" value="C:plasma membrane"/>
    <property type="evidence" value="ECO:0007669"/>
    <property type="project" value="UniProtKB-SubCell"/>
</dbReference>
<dbReference type="GO" id="GO:0016760">
    <property type="term" value="F:cellulose synthase (UDP-forming) activity"/>
    <property type="evidence" value="ECO:0007669"/>
    <property type="project" value="UniProtKB-EC"/>
</dbReference>
<dbReference type="GO" id="GO:0035438">
    <property type="term" value="F:cyclic-di-GMP binding"/>
    <property type="evidence" value="ECO:0007669"/>
    <property type="project" value="InterPro"/>
</dbReference>
<dbReference type="GO" id="GO:0030244">
    <property type="term" value="P:cellulose biosynthetic process"/>
    <property type="evidence" value="ECO:0007669"/>
    <property type="project" value="UniProtKB-KW"/>
</dbReference>
<dbReference type="GO" id="GO:0006011">
    <property type="term" value="P:UDP-alpha-D-glucose metabolic process"/>
    <property type="evidence" value="ECO:0007669"/>
    <property type="project" value="InterPro"/>
</dbReference>
<dbReference type="CDD" id="cd06421">
    <property type="entry name" value="CESA_CelA_like"/>
    <property type="match status" value="1"/>
</dbReference>
<dbReference type="Gene3D" id="2.60.120.260">
    <property type="entry name" value="Galactose-binding domain-like"/>
    <property type="match status" value="2"/>
</dbReference>
<dbReference type="Gene3D" id="2.40.10.220">
    <property type="entry name" value="predicted glycosyltransferase like domains"/>
    <property type="match status" value="1"/>
</dbReference>
<dbReference type="Gene3D" id="3.90.550.10">
    <property type="entry name" value="Spore Coat Polysaccharide Biosynthesis Protein SpsA, Chain A"/>
    <property type="match status" value="1"/>
</dbReference>
<dbReference type="InterPro" id="IPR003919">
    <property type="entry name" value="Cell_synth_A"/>
</dbReference>
<dbReference type="InterPro" id="IPR003920">
    <property type="entry name" value="Cell_synth_B"/>
</dbReference>
<dbReference type="InterPro" id="IPR018513">
    <property type="entry name" value="Cell_synthase_bac"/>
</dbReference>
<dbReference type="InterPro" id="IPR001173">
    <property type="entry name" value="Glyco_trans_2-like"/>
</dbReference>
<dbReference type="InterPro" id="IPR050321">
    <property type="entry name" value="Glycosyltr_2/OpgH_subfam"/>
</dbReference>
<dbReference type="InterPro" id="IPR029044">
    <property type="entry name" value="Nucleotide-diphossugar_trans"/>
</dbReference>
<dbReference type="InterPro" id="IPR009875">
    <property type="entry name" value="PilZ_domain"/>
</dbReference>
<dbReference type="NCBIfam" id="TIGR03030">
    <property type="entry name" value="CelA"/>
    <property type="match status" value="1"/>
</dbReference>
<dbReference type="PANTHER" id="PTHR43867">
    <property type="entry name" value="CELLULOSE SYNTHASE CATALYTIC SUBUNIT A [UDP-FORMING]"/>
    <property type="match status" value="1"/>
</dbReference>
<dbReference type="PANTHER" id="PTHR43867:SF2">
    <property type="entry name" value="CELLULOSE SYNTHASE CATALYTIC SUBUNIT A [UDP-FORMING]"/>
    <property type="match status" value="1"/>
</dbReference>
<dbReference type="Pfam" id="PF03170">
    <property type="entry name" value="BcsB"/>
    <property type="match status" value="1"/>
</dbReference>
<dbReference type="Pfam" id="PF13632">
    <property type="entry name" value="Glyco_trans_2_3"/>
    <property type="match status" value="1"/>
</dbReference>
<dbReference type="Pfam" id="PF07238">
    <property type="entry name" value="PilZ"/>
    <property type="match status" value="1"/>
</dbReference>
<dbReference type="PRINTS" id="PR01440">
    <property type="entry name" value="CELLSNTHASEB"/>
</dbReference>
<dbReference type="SUPFAM" id="SSF53448">
    <property type="entry name" value="Nucleotide-diphospho-sugar transferases"/>
    <property type="match status" value="1"/>
</dbReference>
<dbReference type="SUPFAM" id="SSF141371">
    <property type="entry name" value="PilZ domain-like"/>
    <property type="match status" value="1"/>
</dbReference>
<gene>
    <name type="primary">acsAII</name>
</gene>
<accession>Q59167</accession>
<organism>
    <name type="scientific">Novacetimonas hansenii</name>
    <name type="common">Komagataeibacter hansenii</name>
    <dbReference type="NCBI Taxonomy" id="436"/>
    <lineage>
        <taxon>Bacteria</taxon>
        <taxon>Pseudomonadati</taxon>
        <taxon>Pseudomonadota</taxon>
        <taxon>Alphaproteobacteria</taxon>
        <taxon>Acetobacterales</taxon>
        <taxon>Acetobacteraceae</taxon>
        <taxon>Novacetimonas</taxon>
    </lineage>
</organism>
<feature type="chain" id="PRO_0000059261" description="Cellulose synthase 2">
    <location>
        <begin position="1"/>
        <end position="1596"/>
    </location>
</feature>
<feature type="transmembrane region" description="Helical" evidence="1">
    <location>
        <begin position="25"/>
        <end position="45"/>
    </location>
</feature>
<feature type="transmembrane region" description="Helical" evidence="1">
    <location>
        <begin position="106"/>
        <end position="126"/>
    </location>
</feature>
<feature type="transmembrane region" description="Helical" evidence="1">
    <location>
        <begin position="396"/>
        <end position="416"/>
    </location>
</feature>
<feature type="transmembrane region" description="Helical" evidence="1">
    <location>
        <begin position="421"/>
        <end position="441"/>
    </location>
</feature>
<feature type="transmembrane region" description="Helical" evidence="1">
    <location>
        <begin position="505"/>
        <end position="525"/>
    </location>
</feature>
<feature type="transmembrane region" description="Helical" evidence="1">
    <location>
        <begin position="544"/>
        <end position="564"/>
    </location>
</feature>
<feature type="transmembrane region" description="Helical" evidence="1">
    <location>
        <begin position="1553"/>
        <end position="1573"/>
    </location>
</feature>
<feature type="domain" description="PilZ">
    <location>
        <begin position="570"/>
        <end position="669"/>
    </location>
</feature>
<feature type="region of interest" description="Catalytic">
    <location>
        <begin position="1"/>
        <end position="749"/>
    </location>
</feature>
<feature type="region of interest" description="Catalytic subdomain A">
    <location>
        <begin position="145"/>
        <end position="238"/>
    </location>
</feature>
<feature type="region of interest" description="Catalytic subdomain B">
    <location>
        <begin position="315"/>
        <end position="375"/>
    </location>
</feature>
<feature type="region of interest" description="Cyclic di-GMP binding domain" evidence="1">
    <location>
        <begin position="750"/>
        <end position="1596"/>
    </location>
</feature>
<feature type="region of interest" description="Disordered" evidence="2">
    <location>
        <begin position="769"/>
        <end position="812"/>
    </location>
</feature>
<feature type="region of interest" description="Disordered" evidence="2">
    <location>
        <begin position="828"/>
        <end position="868"/>
    </location>
</feature>
<feature type="compositionally biased region" description="Pro residues" evidence="2">
    <location>
        <begin position="783"/>
        <end position="809"/>
    </location>
</feature>
<feature type="active site" evidence="1">
    <location>
        <position position="187"/>
    </location>
</feature>
<feature type="active site" evidence="1">
    <location>
        <position position="331"/>
    </location>
</feature>
<feature type="binding site" evidence="1">
    <location>
        <position position="234"/>
    </location>
    <ligand>
        <name>substrate</name>
    </ligand>
</feature>
<feature type="binding site" evidence="1">
    <location>
        <position position="236"/>
    </location>
    <ligand>
        <name>substrate</name>
    </ligand>
</feature>
<sequence length="1596" mass="175801">MIYRAILKRLRLEQLARVPAVSAASPFVMMAVGVFLMLMAGGVTISTTSQAFVTCGTVGLFLLLKGRKGRGVTCFLMMLSLLVSLRYMVWRLTTTLELHSPLQAALSLLLVAAELYALLTLCLSYFQMSWPLDRKPLPLPADTTDWPVVDVYVPSYNEELSLVRSTVLGALAIDWPADKLNVYILDDGRRKSFHAFAMEAGAGYIIRDQNNHAKAGNLNHALRVTEGEYVVIFDCDHIPTRGFLKKTIGWMMADPKLALLQTPHHFYSPDPFQRNLATGQNVPPEGNMFYGLVQDGNDFWDATFFCGSCAAIRRSAVLGIGGFATETVTEDAHTALKMQREGWHTAYLRQPLAAGLSTERLMLHIGQRVRWARGMLQIMRLDNPLLGSGLRWQQRLCYLSAMSHFLFAIPRLVFLASPLAFLFLGQNIIAASPFAILVYAFPHVFHSIGTLSRVEGRWRYSFWSEIYETTLALFLVRVTIMTLLNPRKGEFNVTDKGGLLQSEYFDLNAVYPNVILAVILALALVRGIGGMMWEYHDRLALQSFALNTLWVAVSLIIVLASIAVGRETRQIRHKPRVRATLPITLIDEHGQHYHAHTSDISLGGIAARLSTEHALPTQTRVTMLYHNEKDGIDVRIPAVILFSKPGQLHLQWSVDDLDVERQIVEFMFGRNDAWSNWGDFQPDRPVRSFLMVLRSIGGLFRRGQRLFRWQAPQEAPLAESEHVEEEKLEKKSLVLKPVRRSARHGATASLIVLLGLPAAIAPSLAQAPSRATPVATEQGATPVEPPPVNAPPPPSLPQPPGTLPTPPQIAPASAGELLPAATAVSLPTGPATQQMRERLSERTGVSPASPFGDTNTGALPADPSAPPIDPADAARVADGEITRTSTFRDLGLATGPLTLRGFSPLQGLDVIVPANRVVTRARITLSGALSPSLLPEASAVSVTLNEQYVGTIRVDPEHPRFGPITFDIDPLYFTGDNKLNFHFAGEYRRDCNDLYNEVLWARISDFSTVTLTTTRIAPDRKLSYLPAPFYDPNLRTPLRVPVVMPNPDAHGMLKASALVASWFGKLADFRKVSFPVSTTIPASGNAIAIGENLPIDARGTRPTGPTLSEVENPNDRLGTILVLTGRNAQEVEVAARVLAFSSDTLGAVGTKVVNDVTLQPRHPYDAPAFVPTDRPVRFGELVAASDLQGGGFAPPVMALPFHLPPDLYSWRNRPYPIDLWVRTPGGPVVDLETSRLDVHLNNNYLDSFTLKPPSLWAAWSERLVNQHAGAVEHAAALPPWLLFGQNQLKFSFDARPIDRGVCRRTPDDIHMSVDSDSWLDFRRGYHFARLPNLSYFAEAAFPFSRMADLSETTVVVPHHIDAGTAGTFMDLMGFFGATTWYPASGVQVADINDLSEHPPQGDILILATAGDAPKFEELLTRAPYELTDGHIRVGQHMGLQGIWYLFQDHDHAGLQDGVQANLNAPIAGAGVLLGAQSPYRSDRSVVALMGDTPSRMHDLVMGLRSKEDVPRIQGDLVLRNGDRLTSYRTAPTFTMGSLPWWMWLDWYLGTRPLTLYVLGLVGAGLVAAAAVRLLRRRAQHRLEEAARVKDTTDASH</sequence>
<protein>
    <recommendedName>
        <fullName>Cellulose synthase 2</fullName>
    </recommendedName>
    <domain>
        <recommendedName>
            <fullName>Cellulose synthase catalytic subunit [UDP-forming]</fullName>
            <ecNumber>2.4.1.12</ecNumber>
        </recommendedName>
    </domain>
    <domain>
        <recommendedName>
            <fullName>Cyclic di-GMP-binding domain</fullName>
        </recommendedName>
        <alternativeName>
            <fullName>Cellulose synthase 2 regulatory domain</fullName>
        </alternativeName>
    </domain>
</protein>